<gene>
    <name evidence="1" type="primary">tatA</name>
    <name type="ordered locus">RBE_1410</name>
</gene>
<evidence type="ECO:0000255" key="1">
    <source>
        <dbReference type="HAMAP-Rule" id="MF_00236"/>
    </source>
</evidence>
<organism>
    <name type="scientific">Rickettsia bellii (strain RML369-C)</name>
    <dbReference type="NCBI Taxonomy" id="336407"/>
    <lineage>
        <taxon>Bacteria</taxon>
        <taxon>Pseudomonadati</taxon>
        <taxon>Pseudomonadota</taxon>
        <taxon>Alphaproteobacteria</taxon>
        <taxon>Rickettsiales</taxon>
        <taxon>Rickettsiaceae</taxon>
        <taxon>Rickettsieae</taxon>
        <taxon>Rickettsia</taxon>
        <taxon>belli group</taxon>
    </lineage>
</organism>
<reference key="1">
    <citation type="journal article" date="2006" name="PLoS Genet.">
        <title>Genome sequence of Rickettsia bellii illuminates the role of amoebae in gene exchanges between intracellular pathogens.</title>
        <authorList>
            <person name="Ogata H."/>
            <person name="La Scola B."/>
            <person name="Audic S."/>
            <person name="Renesto P."/>
            <person name="Blanc G."/>
            <person name="Robert C."/>
            <person name="Fournier P.-E."/>
            <person name="Claverie J.-M."/>
            <person name="Raoult D."/>
        </authorList>
    </citation>
    <scope>NUCLEOTIDE SEQUENCE [LARGE SCALE GENOMIC DNA]</scope>
    <source>
        <strain>RML369-C</strain>
    </source>
</reference>
<feature type="chain" id="PRO_0000278027" description="Sec-independent protein translocase protein TatA">
    <location>
        <begin position="1"/>
        <end position="51"/>
    </location>
</feature>
<feature type="transmembrane region" description="Helical" evidence="1">
    <location>
        <begin position="1"/>
        <end position="21"/>
    </location>
</feature>
<protein>
    <recommendedName>
        <fullName evidence="1">Sec-independent protein translocase protein TatA</fullName>
    </recommendedName>
</protein>
<name>TATA_RICBR</name>
<dbReference type="EMBL" id="CP000087">
    <property type="protein sequence ID" value="ABE05491.1"/>
    <property type="molecule type" value="Genomic_DNA"/>
</dbReference>
<dbReference type="RefSeq" id="WP_011478060.1">
    <property type="nucleotide sequence ID" value="NC_007940.1"/>
</dbReference>
<dbReference type="SMR" id="Q1RGM3"/>
<dbReference type="KEGG" id="rbe:RBE_1410"/>
<dbReference type="eggNOG" id="COG1826">
    <property type="taxonomic scope" value="Bacteria"/>
</dbReference>
<dbReference type="HOGENOM" id="CLU_086034_6_2_5"/>
<dbReference type="OrthoDB" id="7161179at2"/>
<dbReference type="Proteomes" id="UP000001951">
    <property type="component" value="Chromosome"/>
</dbReference>
<dbReference type="GO" id="GO:0033281">
    <property type="term" value="C:TAT protein transport complex"/>
    <property type="evidence" value="ECO:0007669"/>
    <property type="project" value="UniProtKB-UniRule"/>
</dbReference>
<dbReference type="GO" id="GO:0008320">
    <property type="term" value="F:protein transmembrane transporter activity"/>
    <property type="evidence" value="ECO:0007669"/>
    <property type="project" value="UniProtKB-UniRule"/>
</dbReference>
<dbReference type="GO" id="GO:0043953">
    <property type="term" value="P:protein transport by the Tat complex"/>
    <property type="evidence" value="ECO:0007669"/>
    <property type="project" value="UniProtKB-UniRule"/>
</dbReference>
<dbReference type="Gene3D" id="1.20.5.3310">
    <property type="match status" value="1"/>
</dbReference>
<dbReference type="HAMAP" id="MF_00236">
    <property type="entry name" value="TatA_E"/>
    <property type="match status" value="1"/>
</dbReference>
<dbReference type="InterPro" id="IPR003369">
    <property type="entry name" value="TatA/B/E"/>
</dbReference>
<dbReference type="InterPro" id="IPR006312">
    <property type="entry name" value="TatA/E"/>
</dbReference>
<dbReference type="NCBIfam" id="NF002402">
    <property type="entry name" value="PRK01470.1"/>
    <property type="match status" value="1"/>
</dbReference>
<dbReference type="NCBIfam" id="TIGR01411">
    <property type="entry name" value="tatAE"/>
    <property type="match status" value="1"/>
</dbReference>
<dbReference type="PANTHER" id="PTHR42982">
    <property type="entry name" value="SEC-INDEPENDENT PROTEIN TRANSLOCASE PROTEIN TATA"/>
    <property type="match status" value="1"/>
</dbReference>
<dbReference type="PANTHER" id="PTHR42982:SF1">
    <property type="entry name" value="SEC-INDEPENDENT PROTEIN TRANSLOCASE PROTEIN TATA"/>
    <property type="match status" value="1"/>
</dbReference>
<dbReference type="Pfam" id="PF02416">
    <property type="entry name" value="TatA_B_E"/>
    <property type="match status" value="1"/>
</dbReference>
<sequence>MGMSFSHLLIILLIIFVLFGAGKLPQVMSDLAKGLKAFKDGMKEDDSTKKD</sequence>
<proteinExistence type="inferred from homology"/>
<comment type="function">
    <text evidence="1">Part of the twin-arginine translocation (Tat) system that transports large folded proteins containing a characteristic twin-arginine motif in their signal peptide across membranes. TatA could form the protein-conducting channel of the Tat system.</text>
</comment>
<comment type="subunit">
    <text evidence="1">The Tat system comprises two distinct complexes: a TatABC complex, containing multiple copies of TatA, TatB and TatC subunits, and a separate TatA complex, containing only TatA subunits. Substrates initially bind to the TatABC complex, which probably triggers association of the separate TatA complex to form the active translocon.</text>
</comment>
<comment type="subcellular location">
    <subcellularLocation>
        <location evidence="1">Cell inner membrane</location>
        <topology evidence="1">Single-pass membrane protein</topology>
    </subcellularLocation>
</comment>
<comment type="similarity">
    <text evidence="1">Belongs to the TatA/E family.</text>
</comment>
<accession>Q1RGM3</accession>
<keyword id="KW-0997">Cell inner membrane</keyword>
<keyword id="KW-1003">Cell membrane</keyword>
<keyword id="KW-0472">Membrane</keyword>
<keyword id="KW-0653">Protein transport</keyword>
<keyword id="KW-0811">Translocation</keyword>
<keyword id="KW-0812">Transmembrane</keyword>
<keyword id="KW-1133">Transmembrane helix</keyword>
<keyword id="KW-0813">Transport</keyword>